<accession>P33609</accession>
<proteinExistence type="evidence at protein level"/>
<dbReference type="EC" id="2.7.7.7" evidence="6 8"/>
<dbReference type="EMBL" id="D13543">
    <property type="protein sequence ID" value="BAA40003.1"/>
    <property type="molecule type" value="mRNA"/>
</dbReference>
<dbReference type="EMBL" id="D17384">
    <property type="protein sequence ID" value="BAA04202.1"/>
    <property type="molecule type" value="mRNA"/>
</dbReference>
<dbReference type="CCDS" id="CCDS30272.1"/>
<dbReference type="PIR" id="S45628">
    <property type="entry name" value="S45628"/>
</dbReference>
<dbReference type="RefSeq" id="NP_032918.1">
    <property type="nucleotide sequence ID" value="NM_008892.2"/>
</dbReference>
<dbReference type="SMR" id="P33609"/>
<dbReference type="BioGRID" id="202287">
    <property type="interactions" value="4"/>
</dbReference>
<dbReference type="ComplexPortal" id="CPX-2088">
    <property type="entry name" value="DNA polymerase alpha:primase complex"/>
</dbReference>
<dbReference type="CORUM" id="P33609"/>
<dbReference type="FunCoup" id="P33609">
    <property type="interactions" value="4075"/>
</dbReference>
<dbReference type="IntAct" id="P33609">
    <property type="interactions" value="5"/>
</dbReference>
<dbReference type="MINT" id="P33609"/>
<dbReference type="STRING" id="10090.ENSMUSP00000006856"/>
<dbReference type="ChEMBL" id="CHEMBL2797"/>
<dbReference type="GlyGen" id="P33609">
    <property type="glycosylation" value="1 site, 1 O-linked glycan (1 site)"/>
</dbReference>
<dbReference type="iPTMnet" id="P33609"/>
<dbReference type="PhosphoSitePlus" id="P33609"/>
<dbReference type="SwissPalm" id="P33609"/>
<dbReference type="jPOST" id="P33609"/>
<dbReference type="PaxDb" id="10090-ENSMUSP00000006856"/>
<dbReference type="PeptideAtlas" id="P33609"/>
<dbReference type="ProteomicsDB" id="279570"/>
<dbReference type="Pumba" id="P33609"/>
<dbReference type="Antibodypedia" id="498">
    <property type="antibodies" value="189 antibodies from 28 providers"/>
</dbReference>
<dbReference type="DNASU" id="18968"/>
<dbReference type="Ensembl" id="ENSMUST00000006856.3">
    <property type="protein sequence ID" value="ENSMUSP00000006856.3"/>
    <property type="gene ID" value="ENSMUSG00000006678.7"/>
</dbReference>
<dbReference type="GeneID" id="18968"/>
<dbReference type="KEGG" id="mmu:18968"/>
<dbReference type="UCSC" id="uc009tss.2">
    <property type="organism name" value="mouse"/>
</dbReference>
<dbReference type="AGR" id="MGI:99660"/>
<dbReference type="CTD" id="5422"/>
<dbReference type="MGI" id="MGI:99660">
    <property type="gene designation" value="Pola1"/>
</dbReference>
<dbReference type="VEuPathDB" id="HostDB:ENSMUSG00000006678"/>
<dbReference type="eggNOG" id="KOG0970">
    <property type="taxonomic scope" value="Eukaryota"/>
</dbReference>
<dbReference type="GeneTree" id="ENSGT00550000074891"/>
<dbReference type="HOGENOM" id="CLU_001718_0_0_1"/>
<dbReference type="InParanoid" id="P33609"/>
<dbReference type="OMA" id="MTKMNVG"/>
<dbReference type="OrthoDB" id="6755010at2759"/>
<dbReference type="PhylomeDB" id="P33609"/>
<dbReference type="TreeFam" id="TF103001"/>
<dbReference type="Reactome" id="R-MMU-113501">
    <property type="pathway name" value="Inhibition of replication initiation of damaged DNA by RB1/E2F1"/>
</dbReference>
<dbReference type="Reactome" id="R-MMU-174411">
    <property type="pathway name" value="Polymerase switching on the C-strand of the telomere"/>
</dbReference>
<dbReference type="Reactome" id="R-MMU-174430">
    <property type="pathway name" value="Telomere C-strand synthesis initiation"/>
</dbReference>
<dbReference type="Reactome" id="R-MMU-68952">
    <property type="pathway name" value="DNA replication initiation"/>
</dbReference>
<dbReference type="Reactome" id="R-MMU-68962">
    <property type="pathway name" value="Activation of the pre-replicative complex"/>
</dbReference>
<dbReference type="Reactome" id="R-MMU-69091">
    <property type="pathway name" value="Polymerase switching"/>
</dbReference>
<dbReference type="Reactome" id="R-MMU-69166">
    <property type="pathway name" value="Removal of the Flap Intermediate"/>
</dbReference>
<dbReference type="Reactome" id="R-MMU-69183">
    <property type="pathway name" value="Processive synthesis on the lagging strand"/>
</dbReference>
<dbReference type="BioGRID-ORCS" id="18968">
    <property type="hits" value="35 hits in 116 CRISPR screens"/>
</dbReference>
<dbReference type="ChiTaRS" id="Pola1">
    <property type="organism name" value="mouse"/>
</dbReference>
<dbReference type="PRO" id="PR:P33609"/>
<dbReference type="Proteomes" id="UP000000589">
    <property type="component" value="Chromosome X"/>
</dbReference>
<dbReference type="RNAct" id="P33609">
    <property type="molecule type" value="protein"/>
</dbReference>
<dbReference type="Bgee" id="ENSMUSG00000006678">
    <property type="expression patterns" value="Expressed in blastoderm cell in morula and 200 other cell types or tissues"/>
</dbReference>
<dbReference type="GO" id="GO:0005658">
    <property type="term" value="C:alpha DNA polymerase:primase complex"/>
    <property type="evidence" value="ECO:0000314"/>
    <property type="project" value="UniProtKB"/>
</dbReference>
<dbReference type="GO" id="GO:0000785">
    <property type="term" value="C:chromatin"/>
    <property type="evidence" value="ECO:0000250"/>
    <property type="project" value="UniProtKB"/>
</dbReference>
<dbReference type="GO" id="GO:0005829">
    <property type="term" value="C:cytosol"/>
    <property type="evidence" value="ECO:0000250"/>
    <property type="project" value="UniProtKB"/>
</dbReference>
<dbReference type="GO" id="GO:0005635">
    <property type="term" value="C:nuclear envelope"/>
    <property type="evidence" value="ECO:0000250"/>
    <property type="project" value="UniProtKB"/>
</dbReference>
<dbReference type="GO" id="GO:0016363">
    <property type="term" value="C:nuclear matrix"/>
    <property type="evidence" value="ECO:0000250"/>
    <property type="project" value="UniProtKB"/>
</dbReference>
<dbReference type="GO" id="GO:0005730">
    <property type="term" value="C:nucleolus"/>
    <property type="evidence" value="ECO:0000250"/>
    <property type="project" value="UniProtKB"/>
</dbReference>
<dbReference type="GO" id="GO:0005654">
    <property type="term" value="C:nucleoplasm"/>
    <property type="evidence" value="ECO:0000250"/>
    <property type="project" value="UniProtKB"/>
</dbReference>
<dbReference type="GO" id="GO:0005634">
    <property type="term" value="C:nucleus"/>
    <property type="evidence" value="ECO:0000314"/>
    <property type="project" value="MGI"/>
</dbReference>
<dbReference type="GO" id="GO:0003682">
    <property type="term" value="F:chromatin binding"/>
    <property type="evidence" value="ECO:0000250"/>
    <property type="project" value="UniProtKB"/>
</dbReference>
<dbReference type="GO" id="GO:0003677">
    <property type="term" value="F:DNA binding"/>
    <property type="evidence" value="ECO:0000250"/>
    <property type="project" value="UniProtKB"/>
</dbReference>
<dbReference type="GO" id="GO:0003887">
    <property type="term" value="F:DNA-directed DNA polymerase activity"/>
    <property type="evidence" value="ECO:0000314"/>
    <property type="project" value="MGI"/>
</dbReference>
<dbReference type="GO" id="GO:0000166">
    <property type="term" value="F:nucleotide binding"/>
    <property type="evidence" value="ECO:0000250"/>
    <property type="project" value="UniProtKB"/>
</dbReference>
<dbReference type="GO" id="GO:0008270">
    <property type="term" value="F:zinc ion binding"/>
    <property type="evidence" value="ECO:0000250"/>
    <property type="project" value="UniProtKB"/>
</dbReference>
<dbReference type="GO" id="GO:0006260">
    <property type="term" value="P:DNA replication"/>
    <property type="evidence" value="ECO:0000314"/>
    <property type="project" value="MGI"/>
</dbReference>
<dbReference type="GO" id="GO:0006270">
    <property type="term" value="P:DNA replication initiation"/>
    <property type="evidence" value="ECO:0000314"/>
    <property type="project" value="ComplexPortal"/>
</dbReference>
<dbReference type="GO" id="GO:0006269">
    <property type="term" value="P:DNA replication, synthesis of primer"/>
    <property type="evidence" value="ECO:0000314"/>
    <property type="project" value="UniProtKB"/>
</dbReference>
<dbReference type="GO" id="GO:0006271">
    <property type="term" value="P:DNA strand elongation involved in DNA replication"/>
    <property type="evidence" value="ECO:0000250"/>
    <property type="project" value="UniProtKB"/>
</dbReference>
<dbReference type="GO" id="GO:0006303">
    <property type="term" value="P:double-strand break repair via nonhomologous end joining"/>
    <property type="evidence" value="ECO:0000250"/>
    <property type="project" value="UniProtKB"/>
</dbReference>
<dbReference type="GO" id="GO:0006273">
    <property type="term" value="P:lagging strand elongation"/>
    <property type="evidence" value="ECO:0000250"/>
    <property type="project" value="UniProtKB"/>
</dbReference>
<dbReference type="GO" id="GO:0006272">
    <property type="term" value="P:leading strand elongation"/>
    <property type="evidence" value="ECO:0000250"/>
    <property type="project" value="UniProtKB"/>
</dbReference>
<dbReference type="GO" id="GO:1902975">
    <property type="term" value="P:mitotic DNA replication initiation"/>
    <property type="evidence" value="ECO:0007669"/>
    <property type="project" value="InterPro"/>
</dbReference>
<dbReference type="GO" id="GO:0032479">
    <property type="term" value="P:regulation of type I interferon production"/>
    <property type="evidence" value="ECO:0000250"/>
    <property type="project" value="UniProtKB"/>
</dbReference>
<dbReference type="CDD" id="cd05776">
    <property type="entry name" value="DNA_polB_alpha_exo"/>
    <property type="match status" value="1"/>
</dbReference>
<dbReference type="CDD" id="cd05532">
    <property type="entry name" value="POLBc_alpha"/>
    <property type="match status" value="1"/>
</dbReference>
<dbReference type="FunFam" id="1.10.132.60:FF:000006">
    <property type="entry name" value="DNA polymerase"/>
    <property type="match status" value="1"/>
</dbReference>
<dbReference type="FunFam" id="1.10.287.690:FF:000003">
    <property type="entry name" value="DNA polymerase"/>
    <property type="match status" value="1"/>
</dbReference>
<dbReference type="FunFam" id="1.10.3200.20:FF:000001">
    <property type="entry name" value="DNA polymerase"/>
    <property type="match status" value="1"/>
</dbReference>
<dbReference type="FunFam" id="3.30.420.10:FF:000018">
    <property type="entry name" value="DNA polymerase"/>
    <property type="match status" value="1"/>
</dbReference>
<dbReference type="FunFam" id="3.30.70.2820:FF:000001">
    <property type="entry name" value="DNA polymerase"/>
    <property type="match status" value="1"/>
</dbReference>
<dbReference type="FunFam" id="3.90.1600.10:FF:000022">
    <property type="entry name" value="DNA polymerase"/>
    <property type="match status" value="1"/>
</dbReference>
<dbReference type="FunFam" id="3.90.1600.10:FF:000023">
    <property type="entry name" value="DNA polymerase"/>
    <property type="match status" value="1"/>
</dbReference>
<dbReference type="Gene3D" id="2.40.50.730">
    <property type="match status" value="1"/>
</dbReference>
<dbReference type="Gene3D" id="3.30.70.2820">
    <property type="match status" value="1"/>
</dbReference>
<dbReference type="Gene3D" id="1.10.3200.20">
    <property type="entry name" value="DNA Polymerase alpha, zinc finger"/>
    <property type="match status" value="1"/>
</dbReference>
<dbReference type="Gene3D" id="1.10.132.60">
    <property type="entry name" value="DNA polymerase family B, C-terminal domain"/>
    <property type="match status" value="1"/>
</dbReference>
<dbReference type="Gene3D" id="1.10.287.690">
    <property type="entry name" value="Helix hairpin bin"/>
    <property type="match status" value="1"/>
</dbReference>
<dbReference type="Gene3D" id="3.90.1600.10">
    <property type="entry name" value="Palm domain of DNA polymerase"/>
    <property type="match status" value="1"/>
</dbReference>
<dbReference type="Gene3D" id="3.30.420.10">
    <property type="entry name" value="Ribonuclease H-like superfamily/Ribonuclease H"/>
    <property type="match status" value="1"/>
</dbReference>
<dbReference type="InterPro" id="IPR006172">
    <property type="entry name" value="DNA-dir_DNA_pol_B"/>
</dbReference>
<dbReference type="InterPro" id="IPR017964">
    <property type="entry name" value="DNA-dir_DNA_pol_B_CS"/>
</dbReference>
<dbReference type="InterPro" id="IPR006133">
    <property type="entry name" value="DNA-dir_DNA_pol_B_exonuc"/>
</dbReference>
<dbReference type="InterPro" id="IPR006134">
    <property type="entry name" value="DNA-dir_DNA_pol_B_multi_dom"/>
</dbReference>
<dbReference type="InterPro" id="IPR043502">
    <property type="entry name" value="DNA/RNA_pol_sf"/>
</dbReference>
<dbReference type="InterPro" id="IPR024647">
    <property type="entry name" value="DNA_pol_a_cat_su_N"/>
</dbReference>
<dbReference type="InterPro" id="IPR042087">
    <property type="entry name" value="DNA_pol_B_thumb"/>
</dbReference>
<dbReference type="InterPro" id="IPR023211">
    <property type="entry name" value="DNA_pol_palm_dom_sf"/>
</dbReference>
<dbReference type="InterPro" id="IPR038256">
    <property type="entry name" value="Pol_alpha_znc_sf"/>
</dbReference>
<dbReference type="InterPro" id="IPR045846">
    <property type="entry name" value="POLBc_alpha"/>
</dbReference>
<dbReference type="InterPro" id="IPR012337">
    <property type="entry name" value="RNaseH-like_sf"/>
</dbReference>
<dbReference type="InterPro" id="IPR036397">
    <property type="entry name" value="RNaseH_sf"/>
</dbReference>
<dbReference type="InterPro" id="IPR015088">
    <property type="entry name" value="Znf_DNA-dir_DNA_pol_B_alpha"/>
</dbReference>
<dbReference type="NCBIfam" id="TIGR00592">
    <property type="entry name" value="pol2"/>
    <property type="match status" value="1"/>
</dbReference>
<dbReference type="PANTHER" id="PTHR45861">
    <property type="entry name" value="DNA POLYMERASE ALPHA CATALYTIC SUBUNIT"/>
    <property type="match status" value="1"/>
</dbReference>
<dbReference type="PANTHER" id="PTHR45861:SF1">
    <property type="entry name" value="DNA POLYMERASE ALPHA CATALYTIC SUBUNIT"/>
    <property type="match status" value="1"/>
</dbReference>
<dbReference type="Pfam" id="PF12254">
    <property type="entry name" value="DNA_pol_alpha_N"/>
    <property type="match status" value="1"/>
</dbReference>
<dbReference type="Pfam" id="PF00136">
    <property type="entry name" value="DNA_pol_B"/>
    <property type="match status" value="1"/>
</dbReference>
<dbReference type="Pfam" id="PF03104">
    <property type="entry name" value="DNA_pol_B_exo1"/>
    <property type="match status" value="1"/>
</dbReference>
<dbReference type="Pfam" id="PF08996">
    <property type="entry name" value="zf-DNA_Pol"/>
    <property type="match status" value="1"/>
</dbReference>
<dbReference type="PRINTS" id="PR00106">
    <property type="entry name" value="DNAPOLB"/>
</dbReference>
<dbReference type="SMART" id="SM00486">
    <property type="entry name" value="POLBc"/>
    <property type="match status" value="1"/>
</dbReference>
<dbReference type="SUPFAM" id="SSF56672">
    <property type="entry name" value="DNA/RNA polymerases"/>
    <property type="match status" value="1"/>
</dbReference>
<dbReference type="SUPFAM" id="SSF53098">
    <property type="entry name" value="Ribonuclease H-like"/>
    <property type="match status" value="1"/>
</dbReference>
<dbReference type="SUPFAM" id="SSF90234">
    <property type="entry name" value="Zinc finger domain of DNA polymerase-alpha"/>
    <property type="match status" value="1"/>
</dbReference>
<dbReference type="PROSITE" id="PS00116">
    <property type="entry name" value="DNA_POLYMERASE_B"/>
    <property type="match status" value="1"/>
</dbReference>
<gene>
    <name type="primary">Pola1</name>
    <name type="synonym">Pola</name>
</gene>
<evidence type="ECO:0000250" key="1"/>
<evidence type="ECO:0000250" key="2">
    <source>
        <dbReference type="UniProtKB" id="P09884"/>
    </source>
</evidence>
<evidence type="ECO:0000255" key="3"/>
<evidence type="ECO:0000256" key="4">
    <source>
        <dbReference type="SAM" id="MobiDB-lite"/>
    </source>
</evidence>
<evidence type="ECO:0000269" key="5">
    <source>
    </source>
</evidence>
<evidence type="ECO:0000269" key="6">
    <source>
    </source>
</evidence>
<evidence type="ECO:0000269" key="7">
    <source>
    </source>
</evidence>
<evidence type="ECO:0000269" key="8">
    <source>
    </source>
</evidence>
<evidence type="ECO:0000305" key="9"/>
<evidence type="ECO:0000305" key="10">
    <source>
    </source>
</evidence>
<evidence type="ECO:0007744" key="11">
    <source>
    </source>
</evidence>
<evidence type="ECO:0007744" key="12">
    <source>
    </source>
</evidence>
<name>DPOLA_MOUSE</name>
<organism>
    <name type="scientific">Mus musculus</name>
    <name type="common">Mouse</name>
    <dbReference type="NCBI Taxonomy" id="10090"/>
    <lineage>
        <taxon>Eukaryota</taxon>
        <taxon>Metazoa</taxon>
        <taxon>Chordata</taxon>
        <taxon>Craniata</taxon>
        <taxon>Vertebrata</taxon>
        <taxon>Euteleostomi</taxon>
        <taxon>Mammalia</taxon>
        <taxon>Eutheria</taxon>
        <taxon>Euarchontoglires</taxon>
        <taxon>Glires</taxon>
        <taxon>Rodentia</taxon>
        <taxon>Myomorpha</taxon>
        <taxon>Muroidea</taxon>
        <taxon>Muridae</taxon>
        <taxon>Murinae</taxon>
        <taxon>Mus</taxon>
        <taxon>Mus</taxon>
    </lineage>
</organism>
<feature type="chain" id="PRO_0000046429" description="DNA polymerase alpha catalytic subunit">
    <location>
        <begin position="1"/>
        <end position="1465"/>
    </location>
</feature>
<feature type="zinc finger region" description="CysA-type">
    <location>
        <begin position="1287"/>
        <end position="1317"/>
    </location>
</feature>
<feature type="region of interest" description="Disordered" evidence="4">
    <location>
        <begin position="20"/>
        <end position="39"/>
    </location>
</feature>
<feature type="region of interest" description="Disordered" evidence="4">
    <location>
        <begin position="105"/>
        <end position="135"/>
    </location>
</feature>
<feature type="region of interest" description="Disordered" evidence="4">
    <location>
        <begin position="261"/>
        <end position="297"/>
    </location>
</feature>
<feature type="region of interest" description="DNA-binding" evidence="3">
    <location>
        <begin position="654"/>
        <end position="719"/>
    </location>
</feature>
<feature type="region of interest" description="DNA-binding" evidence="3">
    <location>
        <begin position="1249"/>
        <end position="1380"/>
    </location>
</feature>
<feature type="short sequence motif" description="CysB motif">
    <location>
        <begin position="1352"/>
        <end position="1378"/>
    </location>
</feature>
<feature type="compositionally biased region" description="Basic residues" evidence="4">
    <location>
        <begin position="26"/>
        <end position="35"/>
    </location>
</feature>
<feature type="compositionally biased region" description="Basic and acidic residues" evidence="4">
    <location>
        <begin position="265"/>
        <end position="274"/>
    </location>
</feature>
<feature type="compositionally biased region" description="Basic and acidic residues" evidence="4">
    <location>
        <begin position="285"/>
        <end position="297"/>
    </location>
</feature>
<feature type="binding site" evidence="2">
    <location>
        <position position="1287"/>
    </location>
    <ligand>
        <name>Zn(2+)</name>
        <dbReference type="ChEBI" id="CHEBI:29105"/>
        <label>1</label>
    </ligand>
</feature>
<feature type="binding site" evidence="2">
    <location>
        <position position="1290"/>
    </location>
    <ligand>
        <name>Zn(2+)</name>
        <dbReference type="ChEBI" id="CHEBI:29105"/>
        <label>1</label>
    </ligand>
</feature>
<feature type="binding site" evidence="2">
    <location>
        <position position="1314"/>
    </location>
    <ligand>
        <name>Zn(2+)</name>
        <dbReference type="ChEBI" id="CHEBI:29105"/>
        <label>1</label>
    </ligand>
</feature>
<feature type="binding site" evidence="2">
    <location>
        <position position="1319"/>
    </location>
    <ligand>
        <name>Zn(2+)</name>
        <dbReference type="ChEBI" id="CHEBI:29105"/>
        <label>1</label>
    </ligand>
</feature>
<feature type="binding site" evidence="2">
    <location>
        <position position="1352"/>
    </location>
    <ligand>
        <name>Zn(2+)</name>
        <dbReference type="ChEBI" id="CHEBI:29105"/>
        <label>2</label>
    </ligand>
</feature>
<feature type="binding site" evidence="2">
    <location>
        <position position="1357"/>
    </location>
    <ligand>
        <name>Zn(2+)</name>
        <dbReference type="ChEBI" id="CHEBI:29105"/>
        <label>2</label>
    </ligand>
</feature>
<feature type="binding site" evidence="2">
    <location>
        <position position="1375"/>
    </location>
    <ligand>
        <name>Zn(2+)</name>
        <dbReference type="ChEBI" id="CHEBI:29105"/>
        <label>2</label>
    </ligand>
</feature>
<feature type="binding site" evidence="2">
    <location>
        <position position="1378"/>
    </location>
    <ligand>
        <name>Zn(2+)</name>
        <dbReference type="ChEBI" id="CHEBI:29105"/>
        <label>2</label>
    </ligand>
</feature>
<feature type="modified residue" description="Phosphothreonine" evidence="2">
    <location>
        <position position="180"/>
    </location>
</feature>
<feature type="modified residue" description="Phosphoserine" evidence="2">
    <location>
        <position position="192"/>
    </location>
</feature>
<feature type="modified residue" description="Phosphoserine" evidence="11">
    <location>
        <position position="215"/>
    </location>
</feature>
<feature type="modified residue" description="N6-acetyllysine" evidence="12">
    <location>
        <position position="230"/>
    </location>
</feature>
<feature type="modified residue" description="N6-succinyllysine" evidence="12">
    <location>
        <position position="974"/>
    </location>
</feature>
<feature type="sequence variant" description="In temperature-sensitive FT20 cell line; defective activity." evidence="7">
    <original>S</original>
    <variation>F</variation>
    <location>
        <position position="1180"/>
    </location>
</feature>
<feature type="mutagenesis site" description="Results in loss of primer extension catalytic activity but retains ability to bind to the primase complex." evidence="8">
    <original>D</original>
    <variation>N</variation>
    <location>
        <position position="1008"/>
    </location>
</feature>
<keyword id="KW-0007">Acetylation</keyword>
<keyword id="KW-0963">Cytoplasm</keyword>
<keyword id="KW-0903">Direct protein sequencing</keyword>
<keyword id="KW-0235">DNA replication</keyword>
<keyword id="KW-0238">DNA-binding</keyword>
<keyword id="KW-0239">DNA-directed DNA polymerase</keyword>
<keyword id="KW-0479">Metal-binding</keyword>
<keyword id="KW-0548">Nucleotidyltransferase</keyword>
<keyword id="KW-0539">Nucleus</keyword>
<keyword id="KW-0597">Phosphoprotein</keyword>
<keyword id="KW-1185">Reference proteome</keyword>
<keyword id="KW-0808">Transferase</keyword>
<keyword id="KW-0862">Zinc</keyword>
<keyword id="KW-0863">Zinc-finger</keyword>
<sequence length="1465" mass="167340">MAPMHEEDCKLEASAVSDSGSFAASRARREKKSKKGRQEALERLKKAKAGEKYKYEVEDLTSVYEEVDEEQYSKLVQARQDDDWIVDDDGIGYVEDGREIFDDDLEDDALDTCGKGSDGKAHRKDRKDVKKPSVTKPNNIKAMFIASAGKKTTDKAVDLSKDDLLGDILQDLNTETAQITPPPVLIPKKKRSTGALLNPFSVHTPKAIPSGKPASPVLRNEPLLTPIPLKRAELAGELAQPECPEDEQELGVMEFEDGDFDESMDTEKVDEKPVTAKTWDQETEPVERVEHEADPERGTTSYLENFLPDVSCWDIDQDDESIPQEVQVDSSNLPLVKGADDEQVFQFYWLDAYEDPYNQPGVVFLFGKVWIESVKTHVSCCVMVKNIERTLYFLPREMKFDLNTGKETAIPVTMKDVYEEFDSKISAKYKIMKFKSKIVEKNYAFEIPDVPEKSEYLEVRYSAEVPQLPQNLKGETFSHVFGTNTSSLELFLMNRKIKGPCWLEVKNPQLLNQPISWCKFEVMALKPDLVNVIKDVSPPPLVVMSFSMKTMQNVQNHQHEIIAMAALVHHSFALDKAPPEPPFQTHFCVVSKPKDCIFPCDFKEVISKKNMKVEIAATERTLIGFFLAKVHKIDPDILVGHNICSFELEVLLQRINECKVPYWSKIGRLRRSNMPKLGSRSGFGERNATCGRMICDVEISAKELIHCKSYHLSELVQQILKTERIVIPTENIRNMYSESSYLLYLLEHIWKDARFILQIMCELNVLPLALQITNIAGNIMSRTLMGGRSERNEFLLLHAFYENNYIVPDKQIFRKPQQKLGDEDEEIDGDTNKYKKGRKKATYAGGLVLDPKVGFYDKFILLLDFNSLYPSIIQEFNICFTTVQRVTSEVQKATEDEEQEQIPELPDPNLEMGILPREIRKLVERRKQVKQLMKQQDLNPDLVLQYDIRQKALKLTANSMYGCLGFSYSRFYAKPLAALVTYKGREILMHTKDMVQKMNLEVIYGDTDSIMINTNSTNLEEVFKLGNKVKSEVNKLYKLLEIDIDAVFKSLLLLKKKKYAALVVEPTSDGNYITKQELKGLDIVRRDWCDLAKDTGNFVIGQILSDQSRDTIVENIQKRLIEIGENVLNGSVPVSQFEINKALTKDPQDYPDRKSLPHVHVALWINSQGGRKVKAGDTVSYVICQDGSNLTATQRAYAPEQLQKLDNLAIDTQYYLAQQIHPVVARICEPIDGIDAVLIALWLGLDSTQFRVHQYHKDEENDALLGGPAQLTDEEKYKDCEKFKCLCPSCGTENIYDNVFEGSGLDMEPSLYRCSNVDCKVSPLTFMVQLSNKLIMDIRRCIKKYYDGWLICEEPTCCSRLRRLPLHFSRNGPLCPVCMKAVLRPEYSDKSLYTQLCFYRYIFDADCALEKLTEHEKDKLKKQFFPLRVLQDYRKVKNIAEQFLSWSGYSEVNLSKLFANYAGKS</sequence>
<protein>
    <recommendedName>
        <fullName>DNA polymerase alpha catalytic subunit</fullName>
        <ecNumber evidence="6 8">2.7.7.7</ecNumber>
    </recommendedName>
    <alternativeName>
        <fullName>DNA polymerase alpha catalytic subunit p180</fullName>
    </alternativeName>
</protein>
<reference key="1">
    <citation type="journal article" date="1993" name="J. Biol. Chem.">
        <title>Molecular cloning of the cDNAs for the four subunits of mouse DNA polymerase alpha-primase complex and their gene expression during cell proliferation and the cell cycle.</title>
        <authorList>
            <person name="Miyazawa H."/>
            <person name="Izumi M."/>
            <person name="Tada S."/>
            <person name="Takada R."/>
            <person name="Masutani M."/>
            <person name="Ui M."/>
            <person name="Hanaoka F."/>
        </authorList>
    </citation>
    <scope>NUCLEOTIDE SEQUENCE [MRNA]</scope>
    <scope>PROTEIN SEQUENCE OF 454-472 AND 1438-1455</scope>
</reference>
<reference key="2">
    <citation type="journal article" date="1993" name="J. Biol. Chem.">
        <title>Enzymatic characterization of the individual mammalian primase subunits reveals a biphasic mechanism for initiation of DNA replication.</title>
        <authorList>
            <person name="Copeland W.C."/>
            <person name="Wang T.S."/>
        </authorList>
    </citation>
    <scope>FUNCTION</scope>
    <scope>CATALYTIC ACTIVITY</scope>
    <scope>INTERACTION WITH PRIM2</scope>
    <scope>MUTAGENESIS OF ASP-1008</scope>
</reference>
<reference key="3">
    <citation type="journal article" date="1994" name="Eur. J. Biochem.">
        <title>DNA replication in vitro by recombinant DNA-polymerase-alpha-primase.</title>
        <authorList>
            <person name="Stadlbauer F."/>
            <person name="Brueckner A."/>
            <person name="Rehfuess C."/>
            <person name="Eckerskorn C."/>
            <person name="Lottspeich F."/>
            <person name="Foerster V."/>
            <person name="Tseng B.Y."/>
            <person name="Nasheuer H.-P."/>
        </authorList>
    </citation>
    <scope>NUCLEOTIDE SEQUENCE [MRNA]</scope>
    <scope>FUNCTION</scope>
    <scope>CATALYTIC ACTIVITY</scope>
</reference>
<reference key="4">
    <citation type="journal article" date="2010" name="Cell">
        <title>A tissue-specific atlas of mouse protein phosphorylation and expression.</title>
        <authorList>
            <person name="Huttlin E.L."/>
            <person name="Jedrychowski M.P."/>
            <person name="Elias J.E."/>
            <person name="Goswami T."/>
            <person name="Rad R."/>
            <person name="Beausoleil S.A."/>
            <person name="Villen J."/>
            <person name="Haas W."/>
            <person name="Sowa M.E."/>
            <person name="Gygi S.P."/>
        </authorList>
    </citation>
    <scope>PHOSPHORYLATION [LARGE SCALE ANALYSIS] AT SER-215</scope>
    <scope>IDENTIFICATION BY MASS SPECTROMETRY [LARGE SCALE ANALYSIS]</scope>
    <source>
        <tissue>Kidney</tissue>
        <tissue>Lung</tissue>
        <tissue>Pancreas</tissue>
        <tissue>Spleen</tissue>
        <tissue>Testis</tissue>
    </source>
</reference>
<reference key="5">
    <citation type="journal article" date="2013" name="Mol. Cell">
        <title>SIRT5-mediated lysine desuccinylation impacts diverse metabolic pathways.</title>
        <authorList>
            <person name="Park J."/>
            <person name="Chen Y."/>
            <person name="Tishkoff D.X."/>
            <person name="Peng C."/>
            <person name="Tan M."/>
            <person name="Dai L."/>
            <person name="Xie Z."/>
            <person name="Zhang Y."/>
            <person name="Zwaans B.M."/>
            <person name="Skinner M.E."/>
            <person name="Lombard D.B."/>
            <person name="Zhao Y."/>
        </authorList>
    </citation>
    <scope>ACETYLATION [LARGE SCALE ANALYSIS] AT LYS-230</scope>
    <scope>SUCCINYLATION [LARGE SCALE ANALYSIS] AT LYS-974</scope>
    <scope>IDENTIFICATION BY MASS SPECTROMETRY [LARGE SCALE ANALYSIS]</scope>
    <source>
        <tissue>Embryonic fibroblast</tissue>
    </source>
</reference>
<reference key="6">
    <citation type="journal article" date="1994" name="J. Biol. Chem.">
        <title>Identification of a point mutation in the cDNA of the catalytic subunit of DNA polymerase alpha from a temperature-sensitive mouse FM3A cell line.</title>
        <authorList>
            <person name="Izumi M."/>
            <person name="Miyazawa H."/>
            <person name="Harakawa S."/>
            <person name="Yatagai F."/>
            <person name="Hanaoka F."/>
        </authorList>
    </citation>
    <scope>VARIANT PHE-1180</scope>
</reference>
<reference key="7">
    <citation type="journal article" date="2019" name="Am. J. Hum. Genet.">
        <title>Defective DNA Polymerase alpha-Primase Leads to X-Linked Intellectual Disability Associated with Severe Growth Retardation, Microcephaly, and Hypogonadism.</title>
        <authorList>
            <person name="Van Esch H."/>
            <person name="Colnaghi R."/>
            <person name="Freson K."/>
            <person name="Starokadomskyy P."/>
            <person name="Zankl A."/>
            <person name="Backx L."/>
            <person name="Abramowicz I."/>
            <person name="Outwin E."/>
            <person name="Rohena L."/>
            <person name="Faulkner C."/>
            <person name="Leong G.M."/>
            <person name="Newbury-Ecob R.A."/>
            <person name="Challis R.C."/>
            <person name="Ounap K."/>
            <person name="Jaeken J."/>
            <person name="Seuntjens E."/>
            <person name="Devriendt K."/>
            <person name="Burstein E."/>
            <person name="Low K.J."/>
            <person name="O'Driscoll M."/>
        </authorList>
    </citation>
    <scope>TISSUE SPECIFICITY</scope>
</reference>
<comment type="function">
    <text evidence="2 6 8">Catalytic subunit of the DNA polymerase alpha complex (also known as the alpha DNA polymerase-primase complex) which plays an essential role in the initiation of DNA synthesis (PubMed:8026492, PubMed:8253737). During the S phase of the cell cycle, the DNA polymerase alpha complex (composed of a catalytic subunit POLA1, a regulatory subunit POLA2 and two primase subunits PRIM1 and PRIM2) is recruited to DNA at the replicative forks via direct interactions with MCM10 and WDHD1. The primase subunit of the polymerase alpha complex initiates DNA synthesis by oligomerising short RNA primers on both leading and lagging strands. These primers are initially extended by the polymerase alpha catalytic subunit and subsequently transferred to polymerase delta and polymerase epsilon for processive synthesis on the lagging and leading strand, respectively. The reason this transfer occurs is because the polymerase alpha has limited processivity and lacks intrinsic 3' exonuclease activity for proofreading error, and therefore is not well suited for replicating long complexes. In the cytosol, responsible for a substantial proportion of the physiological concentration of cytosolic RNA:DNA hybrids, which are necessary to prevent spontaneous activation of type I interferon responses.</text>
</comment>
<comment type="catalytic activity">
    <reaction evidence="6 8">
        <text>DNA(n) + a 2'-deoxyribonucleoside 5'-triphosphate = DNA(n+1) + diphosphate</text>
        <dbReference type="Rhea" id="RHEA:22508"/>
        <dbReference type="Rhea" id="RHEA-COMP:17339"/>
        <dbReference type="Rhea" id="RHEA-COMP:17340"/>
        <dbReference type="ChEBI" id="CHEBI:33019"/>
        <dbReference type="ChEBI" id="CHEBI:61560"/>
        <dbReference type="ChEBI" id="CHEBI:173112"/>
        <dbReference type="EC" id="2.7.7.7"/>
    </reaction>
    <physiologicalReaction direction="left-to-right" evidence="10">
        <dbReference type="Rhea" id="RHEA:22509"/>
    </physiologicalReaction>
</comment>
<comment type="subunit">
    <text evidence="1 6 8">Component of the alpha DNA polymerase complex (also known as the alpha DNA polymerase-primase complex) consisting of four subunits: the catalytic subunit POLA1, the regulatory subunit POLA2, and the primase complex subunits PRIM1 and PRIM2 respectively (PubMed:8026492, PubMed:8253737). Within the complex, POLA1 directly interacts with PRIM2 (PubMed:8253737). Interacts with PARP1; this interaction functions as part of the control of replication fork progression. Interacts with MCM10 and WDHD1; these interactions recruit the polymerase alpha complex to the pre-replicative complex bound to DNA. Interacts with RPA1; this interaction stabilizes the replicative complex and reduces the misincorporation rate of DNA polymerase alpha by acting as a fidelity clamp (By similarity).</text>
</comment>
<comment type="interaction">
    <interactant intactId="EBI-688051">
        <id>P33609</id>
    </interactant>
    <interactant intactId="EBI-848759">
        <id>P33611</id>
        <label>Pola2</label>
    </interactant>
    <organismsDiffer>false</organismsDiffer>
    <experiments>5</experiments>
</comment>
<comment type="interaction">
    <interactant intactId="EBI-688051">
        <id>P33609</id>
    </interactant>
    <interactant intactId="EBI-848742">
        <id>P20664</id>
        <label>Prim1</label>
    </interactant>
    <organismsDiffer>false</organismsDiffer>
    <experiments>4</experiments>
</comment>
<comment type="subcellular location">
    <subcellularLocation>
        <location evidence="2">Nucleus</location>
    </subcellularLocation>
    <subcellularLocation>
        <location evidence="2">Cytoplasm</location>
        <location evidence="2">Cytosol</location>
    </subcellularLocation>
    <text evidence="2">In the cytosol, colocalizes with RNA:DNA hybrids with a speckled pattern.</text>
</comment>
<comment type="tissue specificity">
    <text evidence="5">Expressed in those zones containing proliferating cells in the developing embryonic neocortex, as well as in the lateral and medial ganglionic eminences. After birth, expressed in cells that remain proliferating in the ventricular and subventricular zone of the striatum.</text>
</comment>
<comment type="miscellaneous">
    <text>In eukaryotes there are five DNA polymerases: alpha, beta, gamma, delta, and epsilon which are responsible for different reactions of DNA synthesis.</text>
</comment>
<comment type="miscellaneous">
    <text>Conserved regions II, IV, III and I are thought to be involved in substrate recognition, binding or PP(i) hydrolysis.</text>
</comment>
<comment type="similarity">
    <text evidence="9">Belongs to the DNA polymerase type-B family.</text>
</comment>